<reference key="1">
    <citation type="journal article" date="2004" name="Mol. Biol. Evol.">
        <title>Human-specific amino acid changes found in 103 protein-coding genes.</title>
        <authorList>
            <person name="Kitano T."/>
            <person name="Liu Y.-H."/>
            <person name="Ueda S."/>
            <person name="Saitou N."/>
        </authorList>
    </citation>
    <scope>NUCLEOTIDE SEQUENCE [GENOMIC DNA]</scope>
</reference>
<feature type="chain" id="PRO_0000219148" description="Beta-1,3-galactosyltransferase 1">
    <location>
        <begin position="1"/>
        <end position="326"/>
    </location>
</feature>
<feature type="topological domain" description="Cytoplasmic" evidence="3">
    <location>
        <begin position="1"/>
        <end position="6"/>
    </location>
</feature>
<feature type="transmembrane region" description="Helical; Signal-anchor for type II membrane protein" evidence="3">
    <location>
        <begin position="7"/>
        <end position="26"/>
    </location>
</feature>
<feature type="topological domain" description="Lumenal" evidence="3">
    <location>
        <begin position="27"/>
        <end position="326"/>
    </location>
</feature>
<feature type="glycosylation site" description="N-linked (GlcNAc...) asparagine" evidence="3">
    <location>
        <position position="47"/>
    </location>
</feature>
<feature type="glycosylation site" description="N-linked (GlcNAc...) asparagine" evidence="3">
    <location>
        <position position="151"/>
    </location>
</feature>
<comment type="function">
    <text evidence="2">Beta-1,3-galactosyltransferase that transfers galactose from UDP-galactose to substrates with a terminal beta-N-acetylglucosamine (beta-GlcNAc) residue. Involved in the biosynthesis of the carbohydrate moieties of glycolipids and glycoproteins.</text>
</comment>
<comment type="catalytic activity">
    <reaction evidence="2">
        <text>an N-acetyl-beta-D-glucosaminyl derivative + UDP-alpha-D-galactose = a beta-D-galactosyl-(1-&gt;3)-N-acetyl-beta-D-glucosaminyl derivative + UDP + H(+)</text>
        <dbReference type="Rhea" id="RHEA:53432"/>
        <dbReference type="ChEBI" id="CHEBI:15378"/>
        <dbReference type="ChEBI" id="CHEBI:58223"/>
        <dbReference type="ChEBI" id="CHEBI:61631"/>
        <dbReference type="ChEBI" id="CHEBI:66914"/>
        <dbReference type="ChEBI" id="CHEBI:133506"/>
        <dbReference type="EC" id="2.4.1.86"/>
    </reaction>
    <physiologicalReaction direction="left-to-right" evidence="2">
        <dbReference type="Rhea" id="RHEA:53433"/>
    </physiologicalReaction>
</comment>
<comment type="catalytic activity">
    <reaction evidence="2">
        <text>a beta-D-GlcNAc-(1-&gt;3)-beta-D-Gal-(1-&gt;4)-beta-D-Glc-(1&lt;-&gt;1)-Cer(d18:1(4E)) + UDP-alpha-D-galactose = a beta-D-Gal-(1-&gt;3)-beta-D-GlcNAc-(1-&gt;3)-beta-D-Gal-(1-&gt;4)-beta-D-Glc-(1&lt;-&gt;1')-Cer(d18:1(4E)) + UDP + H(+)</text>
        <dbReference type="Rhea" id="RHEA:16045"/>
        <dbReference type="ChEBI" id="CHEBI:15378"/>
        <dbReference type="ChEBI" id="CHEBI:17103"/>
        <dbReference type="ChEBI" id="CHEBI:17292"/>
        <dbReference type="ChEBI" id="CHEBI:58223"/>
        <dbReference type="ChEBI" id="CHEBI:66914"/>
        <dbReference type="EC" id="2.4.1.86"/>
    </reaction>
    <physiologicalReaction direction="left-to-right" evidence="2">
        <dbReference type="Rhea" id="RHEA:16046"/>
    </physiologicalReaction>
</comment>
<comment type="cofactor">
    <cofactor evidence="1">
        <name>Mn(2+)</name>
        <dbReference type="ChEBI" id="CHEBI:29035"/>
    </cofactor>
</comment>
<comment type="pathway">
    <text>Protein modification; protein glycosylation.</text>
</comment>
<comment type="subcellular location">
    <subcellularLocation>
        <location evidence="4">Golgi apparatus membrane</location>
        <topology evidence="4">Single-pass type II membrane protein</topology>
    </subcellularLocation>
</comment>
<comment type="similarity">
    <text evidence="4">Belongs to the glycosyltransferase 31 family.</text>
</comment>
<organism>
    <name type="scientific">Pan troglodytes</name>
    <name type="common">Chimpanzee</name>
    <dbReference type="NCBI Taxonomy" id="9598"/>
    <lineage>
        <taxon>Eukaryota</taxon>
        <taxon>Metazoa</taxon>
        <taxon>Chordata</taxon>
        <taxon>Craniata</taxon>
        <taxon>Vertebrata</taxon>
        <taxon>Euteleostomi</taxon>
        <taxon>Mammalia</taxon>
        <taxon>Eutheria</taxon>
        <taxon>Euarchontoglires</taxon>
        <taxon>Primates</taxon>
        <taxon>Haplorrhini</taxon>
        <taxon>Catarrhini</taxon>
        <taxon>Hominidae</taxon>
        <taxon>Pan</taxon>
    </lineage>
</organism>
<evidence type="ECO:0000250" key="1"/>
<evidence type="ECO:0000250" key="2">
    <source>
        <dbReference type="UniProtKB" id="Q9Y5Z6"/>
    </source>
</evidence>
<evidence type="ECO:0000255" key="3"/>
<evidence type="ECO:0000305" key="4"/>
<accession>Q7JK26</accession>
<dbReference type="EC" id="2.4.1.86" evidence="2"/>
<dbReference type="EMBL" id="AB041408">
    <property type="protein sequence ID" value="BAA94493.1"/>
    <property type="molecule type" value="Genomic_DNA"/>
</dbReference>
<dbReference type="RefSeq" id="NP_001009096.1">
    <property type="nucleotide sequence ID" value="NM_001009096.1"/>
</dbReference>
<dbReference type="RefSeq" id="XP_009441754.1">
    <property type="nucleotide sequence ID" value="XM_009443479.5"/>
</dbReference>
<dbReference type="RefSeq" id="XP_016804818.1">
    <property type="nucleotide sequence ID" value="XM_016949329.1"/>
</dbReference>
<dbReference type="RefSeq" id="XP_016804819.1">
    <property type="nucleotide sequence ID" value="XM_016949330.1"/>
</dbReference>
<dbReference type="RefSeq" id="XP_024210407.1">
    <property type="nucleotide sequence ID" value="XM_024354639.2"/>
</dbReference>
<dbReference type="RefSeq" id="XP_024210408.1">
    <property type="nucleotide sequence ID" value="XM_024354640.2"/>
</dbReference>
<dbReference type="RefSeq" id="XP_054534767.1">
    <property type="nucleotide sequence ID" value="XM_054678792.2"/>
</dbReference>
<dbReference type="SMR" id="Q7JK26"/>
<dbReference type="FunCoup" id="Q7JK26">
    <property type="interactions" value="27"/>
</dbReference>
<dbReference type="STRING" id="9598.ENSPTRP00000021529"/>
<dbReference type="CAZy" id="GT31">
    <property type="family name" value="Glycosyltransferase Family 31"/>
</dbReference>
<dbReference type="GlyCosmos" id="Q7JK26">
    <property type="glycosylation" value="2 sites, No reported glycans"/>
</dbReference>
<dbReference type="PaxDb" id="9598-ENSPTRP00000021529"/>
<dbReference type="Ensembl" id="ENSPTRT00000023346.4">
    <property type="protein sequence ID" value="ENSPTRP00000021529.3"/>
    <property type="gene ID" value="ENSPTRG00000012601.4"/>
</dbReference>
<dbReference type="GeneID" id="459710"/>
<dbReference type="CTD" id="8708"/>
<dbReference type="VGNC" id="VGNC:102">
    <property type="gene designation" value="B3GALT1"/>
</dbReference>
<dbReference type="eggNOG" id="KOG2287">
    <property type="taxonomic scope" value="Eukaryota"/>
</dbReference>
<dbReference type="GeneTree" id="ENSGT00940000156219"/>
<dbReference type="HOGENOM" id="CLU_036849_2_4_1"/>
<dbReference type="InParanoid" id="Q7JK26"/>
<dbReference type="OMA" id="MPRDVYP"/>
<dbReference type="TreeFam" id="TF318639"/>
<dbReference type="UniPathway" id="UPA00378"/>
<dbReference type="Proteomes" id="UP000002277">
    <property type="component" value="Chromosome 2B"/>
</dbReference>
<dbReference type="Bgee" id="ENSPTRG00000012601">
    <property type="expression patterns" value="Expressed in temporal lobe and 11 other cell types or tissues"/>
</dbReference>
<dbReference type="GO" id="GO:0000139">
    <property type="term" value="C:Golgi membrane"/>
    <property type="evidence" value="ECO:0000318"/>
    <property type="project" value="GO_Central"/>
</dbReference>
<dbReference type="GO" id="GO:0008499">
    <property type="term" value="F:N-acetyl-beta-D-glucosaminide beta-(1,3)-galactosyltransferase activity"/>
    <property type="evidence" value="ECO:0000318"/>
    <property type="project" value="GO_Central"/>
</dbReference>
<dbReference type="GO" id="GO:0006682">
    <property type="term" value="P:galactosylceramide biosynthetic process"/>
    <property type="evidence" value="ECO:0007669"/>
    <property type="project" value="Ensembl"/>
</dbReference>
<dbReference type="GO" id="GO:0030259">
    <property type="term" value="P:lipid glycosylation"/>
    <property type="evidence" value="ECO:0000318"/>
    <property type="project" value="GO_Central"/>
</dbReference>
<dbReference type="GO" id="GO:0009312">
    <property type="term" value="P:oligosaccharide biosynthetic process"/>
    <property type="evidence" value="ECO:0007669"/>
    <property type="project" value="Ensembl"/>
</dbReference>
<dbReference type="GO" id="GO:0006493">
    <property type="term" value="P:protein O-linked glycosylation"/>
    <property type="evidence" value="ECO:0000318"/>
    <property type="project" value="GO_Central"/>
</dbReference>
<dbReference type="FunFam" id="3.90.550.50:FF:000001">
    <property type="entry name" value="Hexosyltransferase"/>
    <property type="match status" value="1"/>
</dbReference>
<dbReference type="Gene3D" id="3.90.550.50">
    <property type="match status" value="1"/>
</dbReference>
<dbReference type="InterPro" id="IPR002659">
    <property type="entry name" value="Glyco_trans_31"/>
</dbReference>
<dbReference type="InterPro" id="IPR029044">
    <property type="entry name" value="Nucleotide-diphossugar_trans"/>
</dbReference>
<dbReference type="PANTHER" id="PTHR11214:SF20">
    <property type="entry name" value="BETA-1,3-GALACTOSYLTRANSFERASE 1"/>
    <property type="match status" value="1"/>
</dbReference>
<dbReference type="PANTHER" id="PTHR11214">
    <property type="entry name" value="BETA-1,3-N-ACETYLGLUCOSAMINYLTRANSFERASE"/>
    <property type="match status" value="1"/>
</dbReference>
<dbReference type="Pfam" id="PF01762">
    <property type="entry name" value="Galactosyl_T"/>
    <property type="match status" value="1"/>
</dbReference>
<dbReference type="SUPFAM" id="SSF53448">
    <property type="entry name" value="Nucleotide-diphospho-sugar transferases"/>
    <property type="match status" value="1"/>
</dbReference>
<protein>
    <recommendedName>
        <fullName>Beta-1,3-galactosyltransferase 1</fullName>
        <shortName>Beta-1,3-GalTase 1</shortName>
        <shortName>Beta3Gal-T1</shortName>
        <shortName>Beta3GalT1</shortName>
        <ecNumber evidence="2">2.4.1.86</ecNumber>
    </recommendedName>
    <alternativeName>
        <fullName>UDP-galactose:beta-N-acetyl-glucosamine-beta-1,3-galactosyltransferase 1</fullName>
    </alternativeName>
</protein>
<gene>
    <name type="primary">B3GALT1</name>
</gene>
<sequence length="326" mass="37993">MASKVSCLYVLTVVCWASALWYLSITRPTSSYTGSKPFSHLTVARKNFTFGNIRTRPINPHSFEFLINEPNKCEKNIPFLVILISTTHKEFDARQAIRETWGDENNFKGIKIATLFLLGKNADPVLNQMVEQESQIFHDIIVEDFIDSYHNLTLKTLMGMRWVATFCSKAKYVMKTDSDIFVNMDNLIYKLLKPSTKPRRRYFTGYVINGGPIRDVRSKWYMPRDLYPDSNYPPFCSGTGYIFSADVAELIYKTSLHTRLLHLEDVYVGLCLRKLGIHPFQNSGFNHWKMAYSLCRYRRVITVHQISPEEMHRIWNDMSSKKHLRC</sequence>
<proteinExistence type="inferred from homology"/>
<keyword id="KW-0325">Glycoprotein</keyword>
<keyword id="KW-0328">Glycosyltransferase</keyword>
<keyword id="KW-0333">Golgi apparatus</keyword>
<keyword id="KW-0443">Lipid metabolism</keyword>
<keyword id="KW-0464">Manganese</keyword>
<keyword id="KW-0472">Membrane</keyword>
<keyword id="KW-1185">Reference proteome</keyword>
<keyword id="KW-0735">Signal-anchor</keyword>
<keyword id="KW-0808">Transferase</keyword>
<keyword id="KW-0812">Transmembrane</keyword>
<keyword id="KW-1133">Transmembrane helix</keyword>
<name>B3GT1_PANTR</name>